<name>YACG_SODGM</name>
<evidence type="ECO:0000255" key="1">
    <source>
        <dbReference type="HAMAP-Rule" id="MF_00649"/>
    </source>
</evidence>
<evidence type="ECO:0000256" key="2">
    <source>
        <dbReference type="SAM" id="MobiDB-lite"/>
    </source>
</evidence>
<comment type="function">
    <text evidence="1">Inhibits all the catalytic activities of DNA gyrase by preventing its interaction with DNA. Acts by binding directly to the C-terminal domain of GyrB, which probably disrupts DNA binding by the gyrase.</text>
</comment>
<comment type="cofactor">
    <cofactor evidence="1">
        <name>Zn(2+)</name>
        <dbReference type="ChEBI" id="CHEBI:29105"/>
    </cofactor>
    <text evidence="1">Binds 1 zinc ion.</text>
</comment>
<comment type="subunit">
    <text evidence="1">Interacts with GyrB.</text>
</comment>
<comment type="similarity">
    <text evidence="1">Belongs to the DNA gyrase inhibitor YacG family.</text>
</comment>
<protein>
    <recommendedName>
        <fullName evidence="1">DNA gyrase inhibitor YacG</fullName>
    </recommendedName>
</protein>
<gene>
    <name evidence="1" type="primary">yacG</name>
    <name type="ordered locus">SG0459</name>
</gene>
<dbReference type="EMBL" id="AP008232">
    <property type="protein sequence ID" value="BAE73734.1"/>
    <property type="molecule type" value="Genomic_DNA"/>
</dbReference>
<dbReference type="RefSeq" id="WP_011410432.1">
    <property type="nucleotide sequence ID" value="NC_007712.1"/>
</dbReference>
<dbReference type="SMR" id="Q2NVU1"/>
<dbReference type="STRING" id="343509.SG0459"/>
<dbReference type="KEGG" id="sgl:SG0459"/>
<dbReference type="eggNOG" id="COG3024">
    <property type="taxonomic scope" value="Bacteria"/>
</dbReference>
<dbReference type="HOGENOM" id="CLU_178280_3_1_6"/>
<dbReference type="OrthoDB" id="9809663at2"/>
<dbReference type="BioCyc" id="SGLO343509:SGP1_RS04065-MONOMER"/>
<dbReference type="Proteomes" id="UP000001932">
    <property type="component" value="Chromosome"/>
</dbReference>
<dbReference type="GO" id="GO:0008657">
    <property type="term" value="F:DNA topoisomerase type II (double strand cut, ATP-hydrolyzing) inhibitor activity"/>
    <property type="evidence" value="ECO:0007669"/>
    <property type="project" value="UniProtKB-UniRule"/>
</dbReference>
<dbReference type="GO" id="GO:0008270">
    <property type="term" value="F:zinc ion binding"/>
    <property type="evidence" value="ECO:0007669"/>
    <property type="project" value="UniProtKB-UniRule"/>
</dbReference>
<dbReference type="GO" id="GO:0006355">
    <property type="term" value="P:regulation of DNA-templated transcription"/>
    <property type="evidence" value="ECO:0007669"/>
    <property type="project" value="InterPro"/>
</dbReference>
<dbReference type="Gene3D" id="3.30.50.10">
    <property type="entry name" value="Erythroid Transcription Factor GATA-1, subunit A"/>
    <property type="match status" value="1"/>
</dbReference>
<dbReference type="HAMAP" id="MF_00649">
    <property type="entry name" value="DNA_gyrase_inhibitor_YacG"/>
    <property type="match status" value="1"/>
</dbReference>
<dbReference type="InterPro" id="IPR005584">
    <property type="entry name" value="DNA_gyrase_inhibitor_YacG"/>
</dbReference>
<dbReference type="InterPro" id="IPR013088">
    <property type="entry name" value="Znf_NHR/GATA"/>
</dbReference>
<dbReference type="NCBIfam" id="NF001638">
    <property type="entry name" value="PRK00418.1"/>
    <property type="match status" value="1"/>
</dbReference>
<dbReference type="PANTHER" id="PTHR36150">
    <property type="entry name" value="DNA GYRASE INHIBITOR YACG"/>
    <property type="match status" value="1"/>
</dbReference>
<dbReference type="PANTHER" id="PTHR36150:SF1">
    <property type="entry name" value="DNA GYRASE INHIBITOR YACG"/>
    <property type="match status" value="1"/>
</dbReference>
<dbReference type="Pfam" id="PF03884">
    <property type="entry name" value="YacG"/>
    <property type="match status" value="1"/>
</dbReference>
<dbReference type="SUPFAM" id="SSF57716">
    <property type="entry name" value="Glucocorticoid receptor-like (DNA-binding domain)"/>
    <property type="match status" value="1"/>
</dbReference>
<sequence length="66" mass="7599">MSDDIVNVTCPTCGKAVEWSPTSPFRPFCSKRCQLIDLGEWAEEEKRIPSDVQITDSDEWSDETRY</sequence>
<accession>Q2NVU1</accession>
<reference key="1">
    <citation type="journal article" date="2006" name="Genome Res.">
        <title>Massive genome erosion and functional adaptations provide insights into the symbiotic lifestyle of Sodalis glossinidius in the tsetse host.</title>
        <authorList>
            <person name="Toh H."/>
            <person name="Weiss B.L."/>
            <person name="Perkin S.A.H."/>
            <person name="Yamashita A."/>
            <person name="Oshima K."/>
            <person name="Hattori M."/>
            <person name="Aksoy S."/>
        </authorList>
    </citation>
    <scope>NUCLEOTIDE SEQUENCE [LARGE SCALE GENOMIC DNA]</scope>
    <source>
        <strain>morsitans</strain>
    </source>
</reference>
<proteinExistence type="inferred from homology"/>
<keyword id="KW-0479">Metal-binding</keyword>
<keyword id="KW-0862">Zinc</keyword>
<organism>
    <name type="scientific">Sodalis glossinidius (strain morsitans)</name>
    <dbReference type="NCBI Taxonomy" id="343509"/>
    <lineage>
        <taxon>Bacteria</taxon>
        <taxon>Pseudomonadati</taxon>
        <taxon>Pseudomonadota</taxon>
        <taxon>Gammaproteobacteria</taxon>
        <taxon>Enterobacterales</taxon>
        <taxon>Bruguierivoracaceae</taxon>
        <taxon>Sodalis</taxon>
    </lineage>
</organism>
<feature type="chain" id="PRO_1000057002" description="DNA gyrase inhibitor YacG">
    <location>
        <begin position="1"/>
        <end position="66"/>
    </location>
</feature>
<feature type="region of interest" description="Disordered" evidence="2">
    <location>
        <begin position="46"/>
        <end position="66"/>
    </location>
</feature>
<feature type="compositionally biased region" description="Acidic residues" evidence="2">
    <location>
        <begin position="56"/>
        <end position="66"/>
    </location>
</feature>
<feature type="binding site" evidence="1">
    <location>
        <position position="10"/>
    </location>
    <ligand>
        <name>Zn(2+)</name>
        <dbReference type="ChEBI" id="CHEBI:29105"/>
    </ligand>
</feature>
<feature type="binding site" evidence="1">
    <location>
        <position position="13"/>
    </location>
    <ligand>
        <name>Zn(2+)</name>
        <dbReference type="ChEBI" id="CHEBI:29105"/>
    </ligand>
</feature>
<feature type="binding site" evidence="1">
    <location>
        <position position="29"/>
    </location>
    <ligand>
        <name>Zn(2+)</name>
        <dbReference type="ChEBI" id="CHEBI:29105"/>
    </ligand>
</feature>
<feature type="binding site" evidence="1">
    <location>
        <position position="33"/>
    </location>
    <ligand>
        <name>Zn(2+)</name>
        <dbReference type="ChEBI" id="CHEBI:29105"/>
    </ligand>
</feature>